<reference key="1">
    <citation type="journal article" date="2002" name="Nucleic Acids Res.">
        <title>Genome sequence of Oceanobacillus iheyensis isolated from the Iheya Ridge and its unexpected adaptive capabilities to extreme environments.</title>
        <authorList>
            <person name="Takami H."/>
            <person name="Takaki Y."/>
            <person name="Uchiyama I."/>
        </authorList>
    </citation>
    <scope>NUCLEOTIDE SEQUENCE [LARGE SCALE GENOMIC DNA]</scope>
    <source>
        <strain>DSM 14371 / CIP 107618 / JCM 11309 / KCTC 3954 / HTE831</strain>
    </source>
</reference>
<name>Y413_OCEIH</name>
<keyword id="KW-0963">Cytoplasm</keyword>
<keyword id="KW-0378">Hydrolase</keyword>
<keyword id="KW-0479">Metal-binding</keyword>
<keyword id="KW-1185">Reference proteome</keyword>
<keyword id="KW-0862">Zinc</keyword>
<protein>
    <recommendedName>
        <fullName evidence="1">Putative metal-dependent hydrolase OB0413</fullName>
        <ecNumber evidence="1">3.-.-.-</ecNumber>
    </recommendedName>
</protein>
<comment type="function">
    <text evidence="1">Possible metal-dependent hydrolase.</text>
</comment>
<comment type="cofactor">
    <cofactor evidence="1">
        <name>Zn(2+)</name>
        <dbReference type="ChEBI" id="CHEBI:29105"/>
    </cofactor>
    <text evidence="1">Binds 1 zinc ion per subunit.</text>
</comment>
<comment type="subunit">
    <text evidence="1">Homodimer.</text>
</comment>
<comment type="subcellular location">
    <subcellularLocation>
        <location evidence="1">Cytoplasm</location>
    </subcellularLocation>
</comment>
<comment type="similarity">
    <text evidence="1">Belongs to the metal hydrolase YfiT family.</text>
</comment>
<feature type="chain" id="PRO_0000162378" description="Putative metal-dependent hydrolase OB0413">
    <location>
        <begin position="1"/>
        <end position="173"/>
    </location>
</feature>
<feature type="binding site" evidence="1">
    <location>
        <position position="64"/>
    </location>
    <ligand>
        <name>Zn(2+)</name>
        <dbReference type="ChEBI" id="CHEBI:29105"/>
    </ligand>
</feature>
<feature type="binding site" evidence="1">
    <location>
        <position position="155"/>
    </location>
    <ligand>
        <name>Zn(2+)</name>
        <dbReference type="ChEBI" id="CHEBI:29105"/>
    </ligand>
</feature>
<feature type="binding site" evidence="1">
    <location>
        <position position="159"/>
    </location>
    <ligand>
        <name>Zn(2+)</name>
        <dbReference type="ChEBI" id="CHEBI:29105"/>
    </ligand>
</feature>
<sequence>MDVRFPIGKLQVPEKVTIEDIHEWLKQIETYTNRLGETVNSLNDEELSKTYREGSWDIRQLVHHIADSQLNMYQRLKLALTDESPTVPAFDQEKWAIQPDTNLPVETSIKMLEGINERIVSLGYRLTEEQLDQSFVHQINGEISVASKVAKLAWHEEHHLAHIKIALSNNSGS</sequence>
<dbReference type="EC" id="3.-.-.-" evidence="1"/>
<dbReference type="EMBL" id="BA000028">
    <property type="protein sequence ID" value="BAC12369.1"/>
    <property type="molecule type" value="Genomic_DNA"/>
</dbReference>
<dbReference type="RefSeq" id="WP_011064819.1">
    <property type="nucleotide sequence ID" value="NC_004193.1"/>
</dbReference>
<dbReference type="SMR" id="Q8ET50"/>
<dbReference type="STRING" id="221109.gene:10732616"/>
<dbReference type="KEGG" id="oih:OB0413"/>
<dbReference type="eggNOG" id="COG2318">
    <property type="taxonomic scope" value="Bacteria"/>
</dbReference>
<dbReference type="HOGENOM" id="CLU_105789_1_0_9"/>
<dbReference type="OrthoDB" id="9796039at2"/>
<dbReference type="PhylomeDB" id="Q8ET50"/>
<dbReference type="Proteomes" id="UP000000822">
    <property type="component" value="Chromosome"/>
</dbReference>
<dbReference type="GO" id="GO:0005737">
    <property type="term" value="C:cytoplasm"/>
    <property type="evidence" value="ECO:0007669"/>
    <property type="project" value="UniProtKB-SubCell"/>
</dbReference>
<dbReference type="GO" id="GO:0016787">
    <property type="term" value="F:hydrolase activity"/>
    <property type="evidence" value="ECO:0007669"/>
    <property type="project" value="UniProtKB-UniRule"/>
</dbReference>
<dbReference type="GO" id="GO:0008270">
    <property type="term" value="F:zinc ion binding"/>
    <property type="evidence" value="ECO:0007669"/>
    <property type="project" value="UniProtKB-UniRule"/>
</dbReference>
<dbReference type="Gene3D" id="1.20.120.450">
    <property type="entry name" value="dinb family like domain"/>
    <property type="match status" value="1"/>
</dbReference>
<dbReference type="HAMAP" id="MF_01256">
    <property type="entry name" value="YfiT_hydrol"/>
    <property type="match status" value="1"/>
</dbReference>
<dbReference type="InterPro" id="IPR024775">
    <property type="entry name" value="DinB-like"/>
</dbReference>
<dbReference type="InterPro" id="IPR034660">
    <property type="entry name" value="DinB/YfiT-like"/>
</dbReference>
<dbReference type="InterPro" id="IPR023774">
    <property type="entry name" value="Put_metal_dep_hydrolase_YfiT"/>
</dbReference>
<dbReference type="NCBIfam" id="NF009807">
    <property type="entry name" value="PRK13291.1"/>
    <property type="match status" value="1"/>
</dbReference>
<dbReference type="Pfam" id="PF12867">
    <property type="entry name" value="DinB_2"/>
    <property type="match status" value="1"/>
</dbReference>
<dbReference type="SUPFAM" id="SSF109854">
    <property type="entry name" value="DinB/YfiT-like putative metalloenzymes"/>
    <property type="match status" value="1"/>
</dbReference>
<evidence type="ECO:0000255" key="1">
    <source>
        <dbReference type="HAMAP-Rule" id="MF_01256"/>
    </source>
</evidence>
<accession>Q8ET50</accession>
<organism>
    <name type="scientific">Oceanobacillus iheyensis (strain DSM 14371 / CIP 107618 / JCM 11309 / KCTC 3954 / HTE831)</name>
    <dbReference type="NCBI Taxonomy" id="221109"/>
    <lineage>
        <taxon>Bacteria</taxon>
        <taxon>Bacillati</taxon>
        <taxon>Bacillota</taxon>
        <taxon>Bacilli</taxon>
        <taxon>Bacillales</taxon>
        <taxon>Bacillaceae</taxon>
        <taxon>Oceanobacillus</taxon>
    </lineage>
</organism>
<proteinExistence type="inferred from homology"/>
<gene>
    <name type="ordered locus">OB0413</name>
</gene>